<protein>
    <recommendedName>
        <fullName>Pectinesterase</fullName>
        <shortName>PE</shortName>
        <ecNumber>3.1.1.11</ecNumber>
    </recommendedName>
    <alternativeName>
        <fullName>Pectin methylesterase</fullName>
    </alternativeName>
</protein>
<reference key="1">
    <citation type="journal article" date="1996" name="Biochem. J.">
        <title>Pectin methyl esterase from Aspergillus aculeatus: expression cloning in yeast and characterization of the recombinant enzyme.</title>
        <authorList>
            <person name="Christgau S."/>
            <person name="Kofod L.V."/>
            <person name="Halkier T."/>
            <person name="Andersen L.N."/>
            <person name="Hockauf M."/>
            <person name="Dorreich K."/>
            <person name="Dalboege H."/>
            <person name="Kauppinen S."/>
        </authorList>
    </citation>
    <scope>NUCLEOTIDE SEQUENCE [MRNA]</scope>
    <source>
        <strain>KSM 510</strain>
    </source>
</reference>
<gene>
    <name type="primary">pme1</name>
</gene>
<accession>Q12535</accession>
<dbReference type="EC" id="3.1.1.11"/>
<dbReference type="EMBL" id="U49378">
    <property type="protein sequence ID" value="AAB42153.1"/>
    <property type="molecule type" value="mRNA"/>
</dbReference>
<dbReference type="SMR" id="Q12535"/>
<dbReference type="VEuPathDB" id="FungiDB:ASPACDRAFT_1876912"/>
<dbReference type="BRENDA" id="3.1.1.11">
    <property type="organism ID" value="488"/>
</dbReference>
<dbReference type="UniPathway" id="UPA00545">
    <property type="reaction ID" value="UER00823"/>
</dbReference>
<dbReference type="GO" id="GO:0005576">
    <property type="term" value="C:extracellular region"/>
    <property type="evidence" value="ECO:0007669"/>
    <property type="project" value="UniProtKB-SubCell"/>
</dbReference>
<dbReference type="GO" id="GO:0030599">
    <property type="term" value="F:pectinesterase activity"/>
    <property type="evidence" value="ECO:0007669"/>
    <property type="project" value="UniProtKB-EC"/>
</dbReference>
<dbReference type="GO" id="GO:0042545">
    <property type="term" value="P:cell wall modification"/>
    <property type="evidence" value="ECO:0007669"/>
    <property type="project" value="InterPro"/>
</dbReference>
<dbReference type="GO" id="GO:0045490">
    <property type="term" value="P:pectin catabolic process"/>
    <property type="evidence" value="ECO:0007669"/>
    <property type="project" value="UniProtKB-UniPathway"/>
</dbReference>
<dbReference type="FunFam" id="2.160.20.10:FF:000014">
    <property type="entry name" value="Pectinesterase"/>
    <property type="match status" value="1"/>
</dbReference>
<dbReference type="Gene3D" id="2.160.20.10">
    <property type="entry name" value="Single-stranded right-handed beta-helix, Pectin lyase-like"/>
    <property type="match status" value="1"/>
</dbReference>
<dbReference type="InterPro" id="IPR012334">
    <property type="entry name" value="Pectin_lyas_fold"/>
</dbReference>
<dbReference type="InterPro" id="IPR011050">
    <property type="entry name" value="Pectin_lyase_fold/virulence"/>
</dbReference>
<dbReference type="InterPro" id="IPR033131">
    <property type="entry name" value="Pectinesterase_Asp_AS"/>
</dbReference>
<dbReference type="InterPro" id="IPR000070">
    <property type="entry name" value="Pectinesterase_cat"/>
</dbReference>
<dbReference type="InterPro" id="IPR018040">
    <property type="entry name" value="Pectinesterase_Tyr_AS"/>
</dbReference>
<dbReference type="PANTHER" id="PTHR31321">
    <property type="entry name" value="ACYL-COA THIOESTER HYDROLASE YBHC-RELATED"/>
    <property type="match status" value="1"/>
</dbReference>
<dbReference type="PANTHER" id="PTHR31321:SF127">
    <property type="entry name" value="PECTINESTERASE"/>
    <property type="match status" value="1"/>
</dbReference>
<dbReference type="Pfam" id="PF01095">
    <property type="entry name" value="Pectinesterase"/>
    <property type="match status" value="1"/>
</dbReference>
<dbReference type="SUPFAM" id="SSF51126">
    <property type="entry name" value="Pectin lyase-like"/>
    <property type="match status" value="1"/>
</dbReference>
<dbReference type="PROSITE" id="PS00800">
    <property type="entry name" value="PECTINESTERASE_1"/>
    <property type="match status" value="1"/>
</dbReference>
<dbReference type="PROSITE" id="PS00503">
    <property type="entry name" value="PECTINESTERASE_2"/>
    <property type="match status" value="1"/>
</dbReference>
<feature type="signal peptide" evidence="1">
    <location>
        <begin position="1"/>
        <end position="17"/>
    </location>
</feature>
<feature type="chain" id="PRO_0000023472" description="Pectinesterase">
    <location>
        <begin position="18"/>
        <end position="331"/>
    </location>
</feature>
<feature type="active site" description="Proton donor" evidence="2">
    <location>
        <position position="162"/>
    </location>
</feature>
<feature type="active site" description="Nucleophile" evidence="2">
    <location>
        <position position="183"/>
    </location>
</feature>
<feature type="binding site" evidence="1">
    <location>
        <position position="139"/>
    </location>
    <ligand>
        <name>substrate</name>
    </ligand>
</feature>
<feature type="binding site" evidence="1">
    <location>
        <position position="248"/>
    </location>
    <ligand>
        <name>substrate</name>
    </ligand>
</feature>
<feature type="binding site" evidence="1">
    <location>
        <position position="250"/>
    </location>
    <ligand>
        <name>substrate</name>
    </ligand>
</feature>
<feature type="site" description="Transition state stabilizer" evidence="1">
    <location>
        <position position="161"/>
    </location>
</feature>
<sequence>MVKSVLASALFAVSALAASRTTAPSGAIVVAKSGGDYTTIGDAIDALSTSTTDTQTIFIEEGTYDEQVYLPAMTGKVIIYGQTENTDSYADNLVTITHAISYEDAGESDDLTATFRNKAVGSQVYNLNIANTCGQACHQALALSAWADQQGYYGCNFTGYQDTLLAQTGNQLYINSYIEGAVDFIFGQHARAWFQNVDIRVVEGPTSASITANGRSSETDTSYYVINKSTVAAKEGDDVAEGTYYLGRPWSEYARVVFQQTSMTNVINSLGWTEWSTSTPNTEYVTFGEYANTGAGSEGTRASFAEKLDAKLTITDILGSDYTSWVDTSYF</sequence>
<comment type="function">
    <text>Involved in maceration and soft-rotting of plant tissue.</text>
</comment>
<comment type="catalytic activity">
    <reaction>
        <text>[(1-&gt;4)-alpha-D-galacturonosyl methyl ester](n) + n H2O = [(1-&gt;4)-alpha-D-galacturonosyl](n) + n methanol + n H(+)</text>
        <dbReference type="Rhea" id="RHEA:22380"/>
        <dbReference type="Rhea" id="RHEA-COMP:14570"/>
        <dbReference type="Rhea" id="RHEA-COMP:14573"/>
        <dbReference type="ChEBI" id="CHEBI:15377"/>
        <dbReference type="ChEBI" id="CHEBI:15378"/>
        <dbReference type="ChEBI" id="CHEBI:17790"/>
        <dbReference type="ChEBI" id="CHEBI:140522"/>
        <dbReference type="ChEBI" id="CHEBI:140523"/>
        <dbReference type="EC" id="3.1.1.11"/>
    </reaction>
</comment>
<comment type="pathway">
    <text>Glycan metabolism; pectin degradation; 2-dehydro-3-deoxy-D-gluconate from pectin: step 1/5.</text>
</comment>
<comment type="subcellular location">
    <subcellularLocation>
        <location>Secreted</location>
    </subcellularLocation>
</comment>
<comment type="similarity">
    <text evidence="3">Belongs to the pectinesterase family.</text>
</comment>
<proteinExistence type="evidence at transcript level"/>
<keyword id="KW-0063">Aspartyl esterase</keyword>
<keyword id="KW-0961">Cell wall biogenesis/degradation</keyword>
<keyword id="KW-0378">Hydrolase</keyword>
<keyword id="KW-0964">Secreted</keyword>
<keyword id="KW-0732">Signal</keyword>
<organism>
    <name type="scientific">Aspergillus aculeatus</name>
    <dbReference type="NCBI Taxonomy" id="5053"/>
    <lineage>
        <taxon>Eukaryota</taxon>
        <taxon>Fungi</taxon>
        <taxon>Dikarya</taxon>
        <taxon>Ascomycota</taxon>
        <taxon>Pezizomycotina</taxon>
        <taxon>Eurotiomycetes</taxon>
        <taxon>Eurotiomycetidae</taxon>
        <taxon>Eurotiales</taxon>
        <taxon>Aspergillaceae</taxon>
        <taxon>Aspergillus</taxon>
        <taxon>Aspergillus subgen. Circumdati</taxon>
    </lineage>
</organism>
<evidence type="ECO:0000250" key="1"/>
<evidence type="ECO:0000255" key="2">
    <source>
        <dbReference type="PROSITE-ProRule" id="PRU10040"/>
    </source>
</evidence>
<evidence type="ECO:0000305" key="3"/>
<name>PME_ASPAC</name>